<reference key="1">
    <citation type="journal article" date="2002" name="J. Bacteriol.">
        <title>Whole-genome comparison of Mycobacterium tuberculosis clinical and laboratory strains.</title>
        <authorList>
            <person name="Fleischmann R.D."/>
            <person name="Alland D."/>
            <person name="Eisen J.A."/>
            <person name="Carpenter L."/>
            <person name="White O."/>
            <person name="Peterson J.D."/>
            <person name="DeBoy R.T."/>
            <person name="Dodson R.J."/>
            <person name="Gwinn M.L."/>
            <person name="Haft D.H."/>
            <person name="Hickey E.K."/>
            <person name="Kolonay J.F."/>
            <person name="Nelson W.C."/>
            <person name="Umayam L.A."/>
            <person name="Ermolaeva M.D."/>
            <person name="Salzberg S.L."/>
            <person name="Delcher A."/>
            <person name="Utterback T.R."/>
            <person name="Weidman J.F."/>
            <person name="Khouri H.M."/>
            <person name="Gill J."/>
            <person name="Mikula A."/>
            <person name="Bishai W."/>
            <person name="Jacobs W.R. Jr."/>
            <person name="Venter J.C."/>
            <person name="Fraser C.M."/>
        </authorList>
    </citation>
    <scope>NUCLEOTIDE SEQUENCE [LARGE SCALE GENOMIC DNA]</scope>
    <source>
        <strain>CDC 1551 / Oshkosh</strain>
    </source>
</reference>
<keyword id="KW-0067">ATP-binding</keyword>
<keyword id="KW-0342">GTP-binding</keyword>
<keyword id="KW-0547">Nucleotide-binding</keyword>
<keyword id="KW-1185">Reference proteome</keyword>
<name>Y1421_MYCTO</name>
<comment type="function">
    <text evidence="1">Displays ATPase and GTPase activities.</text>
</comment>
<comment type="similarity">
    <text evidence="1">Belongs to the RapZ-like family.</text>
</comment>
<organism>
    <name type="scientific">Mycobacterium tuberculosis (strain CDC 1551 / Oshkosh)</name>
    <dbReference type="NCBI Taxonomy" id="83331"/>
    <lineage>
        <taxon>Bacteria</taxon>
        <taxon>Bacillati</taxon>
        <taxon>Actinomycetota</taxon>
        <taxon>Actinomycetes</taxon>
        <taxon>Mycobacteriales</taxon>
        <taxon>Mycobacteriaceae</taxon>
        <taxon>Mycobacterium</taxon>
        <taxon>Mycobacterium tuberculosis complex</taxon>
    </lineage>
</organism>
<gene>
    <name type="ordered locus">MT1464</name>
</gene>
<feature type="chain" id="PRO_0000428497" description="Nucleotide-binding protein MT1464">
    <location>
        <begin position="1"/>
        <end position="301"/>
    </location>
</feature>
<feature type="binding site" evidence="1">
    <location>
        <begin position="24"/>
        <end position="31"/>
    </location>
    <ligand>
        <name>ATP</name>
        <dbReference type="ChEBI" id="CHEBI:30616"/>
    </ligand>
</feature>
<feature type="binding site" evidence="1">
    <location>
        <begin position="75"/>
        <end position="78"/>
    </location>
    <ligand>
        <name>GTP</name>
        <dbReference type="ChEBI" id="CHEBI:37565"/>
    </ligand>
</feature>
<proteinExistence type="inferred from homology"/>
<accession>P9WFQ2</accession>
<accession>L0T878</accession>
<accession>P67106</accession>
<accession>P71690</accession>
<evidence type="ECO:0000255" key="1">
    <source>
        <dbReference type="HAMAP-Rule" id="MF_00636"/>
    </source>
</evidence>
<protein>
    <recommendedName>
        <fullName evidence="1">Nucleotide-binding protein MT1464</fullName>
    </recommendedName>
</protein>
<sequence length="301" mass="32912">MMNHARGVENRSEGGGIDVVLVTGLSGAGRGTAAKVLEDLGWYVADNLPPQLITRMVDFGLAAGSRITQLAVVMDVRSRGFTGDLDSVRNELATRAITPRVVFMEASDDTLVRRYEQNRRSHPLQGEQTLAEGIAAERRMLAPVRATADLIIDTSTLSVGGLRDSIERAFGGDGGATTSVTVESFGFKYGLPMDADMVMDVRFLPNPHWVDELRPLTGQHPAVRDYVLHRPGAAEFLESYHRLLSLVVDGYRREGKRYMTIAIGCTGGKHRSVAIAEALMGLLRSDQQLSVRALHRDLGRE</sequence>
<dbReference type="EMBL" id="AE000516">
    <property type="protein sequence ID" value="AAK45729.1"/>
    <property type="molecule type" value="Genomic_DNA"/>
</dbReference>
<dbReference type="PIR" id="B70903">
    <property type="entry name" value="B70903"/>
</dbReference>
<dbReference type="SMR" id="P9WFQ2"/>
<dbReference type="KEGG" id="mtc:MT1464"/>
<dbReference type="PATRIC" id="fig|83331.31.peg.1573"/>
<dbReference type="HOGENOM" id="CLU_059558_0_0_11"/>
<dbReference type="Proteomes" id="UP000001020">
    <property type="component" value="Chromosome"/>
</dbReference>
<dbReference type="GO" id="GO:0005524">
    <property type="term" value="F:ATP binding"/>
    <property type="evidence" value="ECO:0007669"/>
    <property type="project" value="UniProtKB-UniRule"/>
</dbReference>
<dbReference type="GO" id="GO:0005525">
    <property type="term" value="F:GTP binding"/>
    <property type="evidence" value="ECO:0007669"/>
    <property type="project" value="UniProtKB-UniRule"/>
</dbReference>
<dbReference type="HAMAP" id="MF_00636">
    <property type="entry name" value="RapZ_like"/>
    <property type="match status" value="1"/>
</dbReference>
<dbReference type="InterPro" id="IPR027417">
    <property type="entry name" value="P-loop_NTPase"/>
</dbReference>
<dbReference type="InterPro" id="IPR005337">
    <property type="entry name" value="RapZ-like"/>
</dbReference>
<dbReference type="InterPro" id="IPR053930">
    <property type="entry name" value="RapZ-like_N"/>
</dbReference>
<dbReference type="InterPro" id="IPR053931">
    <property type="entry name" value="RapZ_C"/>
</dbReference>
<dbReference type="NCBIfam" id="NF003828">
    <property type="entry name" value="PRK05416.1"/>
    <property type="match status" value="1"/>
</dbReference>
<dbReference type="PANTHER" id="PTHR30448">
    <property type="entry name" value="RNASE ADAPTER PROTEIN RAPZ"/>
    <property type="match status" value="1"/>
</dbReference>
<dbReference type="PANTHER" id="PTHR30448:SF0">
    <property type="entry name" value="RNASE ADAPTER PROTEIN RAPZ"/>
    <property type="match status" value="1"/>
</dbReference>
<dbReference type="Pfam" id="PF22740">
    <property type="entry name" value="PapZ_C"/>
    <property type="match status" value="1"/>
</dbReference>
<dbReference type="Pfam" id="PF03668">
    <property type="entry name" value="RapZ-like_N"/>
    <property type="match status" value="1"/>
</dbReference>
<dbReference type="PIRSF" id="PIRSF005052">
    <property type="entry name" value="P-loopkin"/>
    <property type="match status" value="1"/>
</dbReference>
<dbReference type="SUPFAM" id="SSF52540">
    <property type="entry name" value="P-loop containing nucleoside triphosphate hydrolases"/>
    <property type="match status" value="1"/>
</dbReference>